<sequence length="439" mass="47900">MFASETEASASSTQVTTEEPVQQPSVVDRVAGMPLISSTCHMVSAAYTSTKESHPHVKTVCDVAEKGVKTLTAAAVSGAQPILSKLEPQLTSASEYAHRGLDKLEENLPILQQPSEKVLADTKELVSSKVSEAREAVSNTVSSAKDTVASRVTEAVVVTRGAVQSGVDLTKSMVTSSVHSVMGSRVGQMVLSGVDTVLGKSEEWVDNHLPMTDAELAHLATSLEGFDMASVAQQRQDQSYFVRLGSLSERLRQRAYEHSLGKLQHTRQRAQEALLQLSQALSLMETVKQGVDQKLVEGQEKLHQMWLSWNQKRLQGGEEDPAKPEQVESQTFTMFRDVTQQLQTTCASLGASLQGLPAHVKEQALQARRQVEDLQATFSGMHSFQDLSSNVLMQSREQVARAREALDHVVDYVAQNTPVMWLVGPFAPGVVEKAPEEKK</sequence>
<feature type="chain" id="PRO_0000099892" description="Perilipin-3">
    <location>
        <begin position="1"/>
        <end position="439"/>
    </location>
</feature>
<feature type="region of interest" description="Disordered" evidence="3">
    <location>
        <begin position="1"/>
        <end position="26"/>
    </location>
</feature>
<feature type="coiled-coil region" evidence="2">
    <location>
        <begin position="254"/>
        <end position="282"/>
    </location>
</feature>
<feature type="coiled-coil region" evidence="2">
    <location>
        <begin position="358"/>
        <end position="381"/>
    </location>
</feature>
<feature type="compositionally biased region" description="Low complexity" evidence="3">
    <location>
        <begin position="1"/>
        <end position="19"/>
    </location>
</feature>
<feature type="modified residue" description="N6-acetyllysine" evidence="1">
    <location>
        <position position="66"/>
    </location>
</feature>
<feature type="modified residue" description="Phosphoserine" evidence="1">
    <location>
        <position position="92"/>
    </location>
</feature>
<feature type="modified residue" description="Phosphoserine" evidence="1">
    <location>
        <position position="131"/>
    </location>
</feature>
<feature type="modified residue" description="Phosphothreonine" evidence="1">
    <location>
        <position position="175"/>
    </location>
</feature>
<feature type="modified residue" description="Phosphoserine" evidence="1">
    <location>
        <position position="180"/>
    </location>
</feature>
<feature type="modified residue" description="Phosphoserine" evidence="1">
    <location>
        <position position="184"/>
    </location>
</feature>
<feature type="modified residue" description="Phosphothreonine" evidence="1">
    <location>
        <position position="221"/>
    </location>
</feature>
<feature type="modified residue" description="Phosphoserine" evidence="1">
    <location>
        <position position="222"/>
    </location>
</feature>
<feature type="modified residue" description="Phosphoserine" evidence="1">
    <location>
        <position position="246"/>
    </location>
</feature>
<feature type="modified residue" description="Phosphotyrosine" evidence="1">
    <location>
        <position position="256"/>
    </location>
</feature>
<feature type="cross-link" description="Glycyl lysine isopeptide (Lys-Gly) (interchain with G-Cter in SUMO1)" evidence="1">
    <location>
        <position position="123"/>
    </location>
</feature>
<reference key="1">
    <citation type="submission" date="2005-02" db="EMBL/GenBank/DDBJ databases">
        <authorList>
            <person name="Zhang P."/>
            <person name="Yang Z."/>
            <person name="Duan L."/>
            <person name="Xia T."/>
            <person name="Yang Z."/>
        </authorList>
    </citation>
    <scope>NUCLEOTIDE SEQUENCE [MRNA]</scope>
</reference>
<protein>
    <recommendedName>
        <fullName>Perilipin-3</fullName>
    </recommendedName>
    <alternativeName>
        <fullName>Cargo selection protein TIP47</fullName>
    </alternativeName>
    <alternativeName>
        <fullName>Mannose-6-phosphate receptor-binding protein 1</fullName>
    </alternativeName>
</protein>
<gene>
    <name type="primary">PLIN3</name>
    <name type="synonym">M6PRBP1</name>
    <name type="synonym">TIP47</name>
</gene>
<dbReference type="EMBL" id="AY939831">
    <property type="protein sequence ID" value="AAX31659.1"/>
    <property type="molecule type" value="mRNA"/>
</dbReference>
<dbReference type="RefSeq" id="NP_001026948.1">
    <property type="nucleotide sequence ID" value="NM_001031778.1"/>
</dbReference>
<dbReference type="SMR" id="Q5BLZ2"/>
<dbReference type="FunCoup" id="Q5BLZ2">
    <property type="interactions" value="558"/>
</dbReference>
<dbReference type="STRING" id="9823.ENSSSCP00000034059"/>
<dbReference type="PaxDb" id="9823-ENSSSCP00000021684"/>
<dbReference type="PeptideAtlas" id="Q5BLZ2"/>
<dbReference type="GeneID" id="595103"/>
<dbReference type="KEGG" id="ssc:595103"/>
<dbReference type="CTD" id="10226"/>
<dbReference type="eggNOG" id="ENOG502R7TG">
    <property type="taxonomic scope" value="Eukaryota"/>
</dbReference>
<dbReference type="InParanoid" id="Q5BLZ2"/>
<dbReference type="OrthoDB" id="376826at2759"/>
<dbReference type="Proteomes" id="UP000008227">
    <property type="component" value="Unplaced"/>
</dbReference>
<dbReference type="Proteomes" id="UP000314985">
    <property type="component" value="Unplaced"/>
</dbReference>
<dbReference type="Proteomes" id="UP000694570">
    <property type="component" value="Unplaced"/>
</dbReference>
<dbReference type="Proteomes" id="UP000694571">
    <property type="component" value="Unplaced"/>
</dbReference>
<dbReference type="Proteomes" id="UP000694720">
    <property type="component" value="Unplaced"/>
</dbReference>
<dbReference type="Proteomes" id="UP000694722">
    <property type="component" value="Unplaced"/>
</dbReference>
<dbReference type="Proteomes" id="UP000694723">
    <property type="component" value="Unplaced"/>
</dbReference>
<dbReference type="Proteomes" id="UP000694724">
    <property type="component" value="Unplaced"/>
</dbReference>
<dbReference type="Proteomes" id="UP000694725">
    <property type="component" value="Unplaced"/>
</dbReference>
<dbReference type="Proteomes" id="UP000694726">
    <property type="component" value="Unplaced"/>
</dbReference>
<dbReference type="Proteomes" id="UP000694727">
    <property type="component" value="Unplaced"/>
</dbReference>
<dbReference type="Proteomes" id="UP000694728">
    <property type="component" value="Unplaced"/>
</dbReference>
<dbReference type="GO" id="GO:0005829">
    <property type="term" value="C:cytosol"/>
    <property type="evidence" value="ECO:0000318"/>
    <property type="project" value="GO_Central"/>
</dbReference>
<dbReference type="GO" id="GO:0010008">
    <property type="term" value="C:endosome membrane"/>
    <property type="evidence" value="ECO:0007669"/>
    <property type="project" value="UniProtKB-SubCell"/>
</dbReference>
<dbReference type="GO" id="GO:0005811">
    <property type="term" value="C:lipid droplet"/>
    <property type="evidence" value="ECO:0000250"/>
    <property type="project" value="UniProtKB"/>
</dbReference>
<dbReference type="GO" id="GO:0042149">
    <property type="term" value="P:cellular response to glucose starvation"/>
    <property type="evidence" value="ECO:0000250"/>
    <property type="project" value="UniProtKB"/>
</dbReference>
<dbReference type="GO" id="GO:1905691">
    <property type="term" value="P:lipid droplet disassembly"/>
    <property type="evidence" value="ECO:0000250"/>
    <property type="project" value="UniProtKB"/>
</dbReference>
<dbReference type="GO" id="GO:0019915">
    <property type="term" value="P:lipid storage"/>
    <property type="evidence" value="ECO:0000250"/>
    <property type="project" value="UniProtKB"/>
</dbReference>
<dbReference type="GO" id="GO:0010890">
    <property type="term" value="P:positive regulation of triglyceride storage"/>
    <property type="evidence" value="ECO:0000318"/>
    <property type="project" value="GO_Central"/>
</dbReference>
<dbReference type="FunFam" id="1.20.120.340:FF:000004">
    <property type="entry name" value="Perilipin"/>
    <property type="match status" value="1"/>
</dbReference>
<dbReference type="Gene3D" id="1.20.120.340">
    <property type="entry name" value="Flagellar protein FliS"/>
    <property type="match status" value="1"/>
</dbReference>
<dbReference type="Gene3D" id="3.30.720.170">
    <property type="entry name" value="Perilipin, alpha-beta domain"/>
    <property type="match status" value="1"/>
</dbReference>
<dbReference type="InterPro" id="IPR004279">
    <property type="entry name" value="Perilipin"/>
</dbReference>
<dbReference type="PANTHER" id="PTHR14024">
    <property type="entry name" value="PERILIPIN"/>
    <property type="match status" value="1"/>
</dbReference>
<dbReference type="PANTHER" id="PTHR14024:SF11">
    <property type="entry name" value="PERILIPIN-3"/>
    <property type="match status" value="1"/>
</dbReference>
<dbReference type="Pfam" id="PF03036">
    <property type="entry name" value="Perilipin"/>
    <property type="match status" value="1"/>
</dbReference>
<dbReference type="PIRSF" id="PIRSF036881">
    <property type="entry name" value="PAT"/>
    <property type="match status" value="1"/>
</dbReference>
<dbReference type="SUPFAM" id="SSF109775">
    <property type="entry name" value="Mannose-6-phosphate receptor binding protein 1 (Tip47), C-terminal domain"/>
    <property type="match status" value="1"/>
</dbReference>
<keyword id="KW-0007">Acetylation</keyword>
<keyword id="KW-0175">Coiled coil</keyword>
<keyword id="KW-0963">Cytoplasm</keyword>
<keyword id="KW-0967">Endosome</keyword>
<keyword id="KW-1017">Isopeptide bond</keyword>
<keyword id="KW-0551">Lipid droplet</keyword>
<keyword id="KW-0472">Membrane</keyword>
<keyword id="KW-0597">Phosphoprotein</keyword>
<keyword id="KW-1185">Reference proteome</keyword>
<keyword id="KW-0813">Transport</keyword>
<keyword id="KW-0832">Ubl conjugation</keyword>
<evidence type="ECO:0000250" key="1">
    <source>
        <dbReference type="UniProtKB" id="O60664"/>
    </source>
</evidence>
<evidence type="ECO:0000255" key="2"/>
<evidence type="ECO:0000256" key="3">
    <source>
        <dbReference type="SAM" id="MobiDB-lite"/>
    </source>
</evidence>
<evidence type="ECO:0000305" key="4"/>
<organism>
    <name type="scientific">Sus scrofa</name>
    <name type="common">Pig</name>
    <dbReference type="NCBI Taxonomy" id="9823"/>
    <lineage>
        <taxon>Eukaryota</taxon>
        <taxon>Metazoa</taxon>
        <taxon>Chordata</taxon>
        <taxon>Craniata</taxon>
        <taxon>Vertebrata</taxon>
        <taxon>Euteleostomi</taxon>
        <taxon>Mammalia</taxon>
        <taxon>Eutheria</taxon>
        <taxon>Laurasiatheria</taxon>
        <taxon>Artiodactyla</taxon>
        <taxon>Suina</taxon>
        <taxon>Suidae</taxon>
        <taxon>Sus</taxon>
    </lineage>
</organism>
<comment type="function">
    <text evidence="1">Structural component of lipid droplets, which is required for the formation and maintenance of lipid storage droplets. Required for the transport of mannose 6-phosphate receptors (MPR) from endosomes to the trans-Golgi network.</text>
</comment>
<comment type="subunit">
    <text evidence="1">Homooligomer. Interacts with M6PR (via the cytoplasmic domain). Interacts with IGF2R (via the cytoplasmic domain).</text>
</comment>
<comment type="subcellular location">
    <subcellularLocation>
        <location evidence="1">Lipid droplet</location>
    </subcellularLocation>
    <subcellularLocation>
        <location evidence="1">Endosome membrane</location>
        <topology evidence="1">Peripheral membrane protein</topology>
        <orientation evidence="1">Cytoplasmic side</orientation>
    </subcellularLocation>
    <subcellularLocation>
        <location evidence="1">Cytoplasm</location>
    </subcellularLocation>
    <text evidence="1">Membrane associated on endosomes. Detected in the envelope and the core of lipid bodies and in lipid sails.</text>
</comment>
<comment type="PTM">
    <text evidence="1">Phosphorylation at Tyr-256 by isoform 1 of CHKA (CHKalpha2) promotes dissociation from lipid droplets: dissociation is followed by recruitment of autophagosome machinery to lipid droplets and subsequent lipid droplet lipolysis.</text>
</comment>
<comment type="similarity">
    <text evidence="4">Belongs to the perilipin family.</text>
</comment>
<accession>Q5BLZ2</accession>
<proteinExistence type="evidence at transcript level"/>
<name>PLIN3_PIG</name>